<accession>Q2KVY6</accession>
<protein>
    <recommendedName>
        <fullName evidence="1">Holliday junction branch migration complex subunit RuvA</fullName>
    </recommendedName>
</protein>
<feature type="chain" id="PRO_1000002402" description="Holliday junction branch migration complex subunit RuvA">
    <location>
        <begin position="1"/>
        <end position="190"/>
    </location>
</feature>
<feature type="region of interest" description="Domain I" evidence="1">
    <location>
        <begin position="1"/>
        <end position="64"/>
    </location>
</feature>
<feature type="region of interest" description="Domain II" evidence="1">
    <location>
        <begin position="65"/>
        <end position="137"/>
    </location>
</feature>
<feature type="region of interest" description="Flexible linker" evidence="1">
    <location>
        <begin position="137"/>
        <end position="141"/>
    </location>
</feature>
<feature type="region of interest" description="Domain III" evidence="1">
    <location>
        <begin position="142"/>
        <end position="190"/>
    </location>
</feature>
<evidence type="ECO:0000255" key="1">
    <source>
        <dbReference type="HAMAP-Rule" id="MF_00031"/>
    </source>
</evidence>
<keyword id="KW-0963">Cytoplasm</keyword>
<keyword id="KW-0227">DNA damage</keyword>
<keyword id="KW-0233">DNA recombination</keyword>
<keyword id="KW-0234">DNA repair</keyword>
<keyword id="KW-0238">DNA-binding</keyword>
<keyword id="KW-1185">Reference proteome</keyword>
<sequence>MIGRITGTLIEKTPPVVYVDVNGIGYEIDVPMSTLYALPDTGARVTLFTHLVVREDAHLLYGFGTASERAAFRELVKVSGIGARTALAVLSGMSVAELAQAITLQESGRLTRVPGIGKKTAERLLLEMRGKLGADIGATPHAVPDSQSDILNALLALGYSEKESLAALKTLPEGLGVSDGIRQALKALAR</sequence>
<comment type="function">
    <text evidence="1">The RuvA-RuvB-RuvC complex processes Holliday junction (HJ) DNA during genetic recombination and DNA repair, while the RuvA-RuvB complex plays an important role in the rescue of blocked DNA replication forks via replication fork reversal (RFR). RuvA specifically binds to HJ cruciform DNA, conferring on it an open structure. The RuvB hexamer acts as an ATP-dependent pump, pulling dsDNA into and through the RuvAB complex. HJ branch migration allows RuvC to scan DNA until it finds its consensus sequence, where it cleaves and resolves the cruciform DNA.</text>
</comment>
<comment type="subunit">
    <text evidence="1">Homotetramer. Forms an RuvA(8)-RuvB(12)-Holliday junction (HJ) complex. HJ DNA is sandwiched between 2 RuvA tetramers; dsDNA enters through RuvA and exits via RuvB. An RuvB hexamer assembles on each DNA strand where it exits the tetramer. Each RuvB hexamer is contacted by two RuvA subunits (via domain III) on 2 adjacent RuvB subunits; this complex drives branch migration. In the full resolvosome a probable DNA-RuvA(4)-RuvB(12)-RuvC(2) complex forms which resolves the HJ.</text>
</comment>
<comment type="subcellular location">
    <subcellularLocation>
        <location evidence="1">Cytoplasm</location>
    </subcellularLocation>
</comment>
<comment type="domain">
    <text evidence="1">Has three domains with a flexible linker between the domains II and III and assumes an 'L' shape. Domain III is highly mobile and contacts RuvB.</text>
</comment>
<comment type="similarity">
    <text evidence="1">Belongs to the RuvA family.</text>
</comment>
<name>RUVA_BORA1</name>
<dbReference type="EMBL" id="AM167904">
    <property type="protein sequence ID" value="CAJ50389.1"/>
    <property type="molecule type" value="Genomic_DNA"/>
</dbReference>
<dbReference type="RefSeq" id="WP_012418420.1">
    <property type="nucleotide sequence ID" value="NC_010645.1"/>
</dbReference>
<dbReference type="SMR" id="Q2KVY6"/>
<dbReference type="STRING" id="360910.BAV2778"/>
<dbReference type="KEGG" id="bav:BAV2778"/>
<dbReference type="eggNOG" id="COG0632">
    <property type="taxonomic scope" value="Bacteria"/>
</dbReference>
<dbReference type="HOGENOM" id="CLU_087936_0_0_4"/>
<dbReference type="OrthoDB" id="5293449at2"/>
<dbReference type="Proteomes" id="UP000001977">
    <property type="component" value="Chromosome"/>
</dbReference>
<dbReference type="GO" id="GO:0005737">
    <property type="term" value="C:cytoplasm"/>
    <property type="evidence" value="ECO:0007669"/>
    <property type="project" value="UniProtKB-SubCell"/>
</dbReference>
<dbReference type="GO" id="GO:0009379">
    <property type="term" value="C:Holliday junction helicase complex"/>
    <property type="evidence" value="ECO:0007669"/>
    <property type="project" value="InterPro"/>
</dbReference>
<dbReference type="GO" id="GO:0048476">
    <property type="term" value="C:Holliday junction resolvase complex"/>
    <property type="evidence" value="ECO:0007669"/>
    <property type="project" value="UniProtKB-UniRule"/>
</dbReference>
<dbReference type="GO" id="GO:0005524">
    <property type="term" value="F:ATP binding"/>
    <property type="evidence" value="ECO:0007669"/>
    <property type="project" value="InterPro"/>
</dbReference>
<dbReference type="GO" id="GO:0000400">
    <property type="term" value="F:four-way junction DNA binding"/>
    <property type="evidence" value="ECO:0007669"/>
    <property type="project" value="UniProtKB-UniRule"/>
</dbReference>
<dbReference type="GO" id="GO:0009378">
    <property type="term" value="F:four-way junction helicase activity"/>
    <property type="evidence" value="ECO:0007669"/>
    <property type="project" value="InterPro"/>
</dbReference>
<dbReference type="GO" id="GO:0006310">
    <property type="term" value="P:DNA recombination"/>
    <property type="evidence" value="ECO:0007669"/>
    <property type="project" value="UniProtKB-UniRule"/>
</dbReference>
<dbReference type="GO" id="GO:0006281">
    <property type="term" value="P:DNA repair"/>
    <property type="evidence" value="ECO:0007669"/>
    <property type="project" value="UniProtKB-UniRule"/>
</dbReference>
<dbReference type="CDD" id="cd14332">
    <property type="entry name" value="UBA_RuvA_C"/>
    <property type="match status" value="1"/>
</dbReference>
<dbReference type="Gene3D" id="1.10.150.20">
    <property type="entry name" value="5' to 3' exonuclease, C-terminal subdomain"/>
    <property type="match status" value="1"/>
</dbReference>
<dbReference type="Gene3D" id="1.10.8.10">
    <property type="entry name" value="DNA helicase RuvA subunit, C-terminal domain"/>
    <property type="match status" value="1"/>
</dbReference>
<dbReference type="Gene3D" id="2.40.50.140">
    <property type="entry name" value="Nucleic acid-binding proteins"/>
    <property type="match status" value="1"/>
</dbReference>
<dbReference type="HAMAP" id="MF_00031">
    <property type="entry name" value="DNA_HJ_migration_RuvA"/>
    <property type="match status" value="1"/>
</dbReference>
<dbReference type="InterPro" id="IPR013849">
    <property type="entry name" value="DNA_helicase_Holl-junc_RuvA_I"/>
</dbReference>
<dbReference type="InterPro" id="IPR003583">
    <property type="entry name" value="Hlx-hairpin-Hlx_DNA-bd_motif"/>
</dbReference>
<dbReference type="InterPro" id="IPR012340">
    <property type="entry name" value="NA-bd_OB-fold"/>
</dbReference>
<dbReference type="InterPro" id="IPR000085">
    <property type="entry name" value="RuvA"/>
</dbReference>
<dbReference type="InterPro" id="IPR010994">
    <property type="entry name" value="RuvA_2-like"/>
</dbReference>
<dbReference type="InterPro" id="IPR011114">
    <property type="entry name" value="RuvA_C"/>
</dbReference>
<dbReference type="InterPro" id="IPR036267">
    <property type="entry name" value="RuvA_C_sf"/>
</dbReference>
<dbReference type="NCBIfam" id="TIGR00084">
    <property type="entry name" value="ruvA"/>
    <property type="match status" value="1"/>
</dbReference>
<dbReference type="Pfam" id="PF14520">
    <property type="entry name" value="HHH_5"/>
    <property type="match status" value="1"/>
</dbReference>
<dbReference type="Pfam" id="PF07499">
    <property type="entry name" value="RuvA_C"/>
    <property type="match status" value="1"/>
</dbReference>
<dbReference type="Pfam" id="PF01330">
    <property type="entry name" value="RuvA_N"/>
    <property type="match status" value="1"/>
</dbReference>
<dbReference type="SMART" id="SM00278">
    <property type="entry name" value="HhH1"/>
    <property type="match status" value="2"/>
</dbReference>
<dbReference type="SUPFAM" id="SSF46929">
    <property type="entry name" value="DNA helicase RuvA subunit, C-terminal domain"/>
    <property type="match status" value="1"/>
</dbReference>
<dbReference type="SUPFAM" id="SSF50249">
    <property type="entry name" value="Nucleic acid-binding proteins"/>
    <property type="match status" value="1"/>
</dbReference>
<dbReference type="SUPFAM" id="SSF47781">
    <property type="entry name" value="RuvA domain 2-like"/>
    <property type="match status" value="1"/>
</dbReference>
<reference key="1">
    <citation type="journal article" date="2006" name="J. Bacteriol.">
        <title>Comparison of the genome sequence of the poultry pathogen Bordetella avium with those of B. bronchiseptica, B. pertussis, and B. parapertussis reveals extensive diversity in surface structures associated with host interaction.</title>
        <authorList>
            <person name="Sebaihia M."/>
            <person name="Preston A."/>
            <person name="Maskell D.J."/>
            <person name="Kuzmiak H."/>
            <person name="Connell T.D."/>
            <person name="King N.D."/>
            <person name="Orndorff P.E."/>
            <person name="Miyamoto D.M."/>
            <person name="Thomson N.R."/>
            <person name="Harris D."/>
            <person name="Goble A."/>
            <person name="Lord A."/>
            <person name="Murphy L."/>
            <person name="Quail M.A."/>
            <person name="Rutter S."/>
            <person name="Squares R."/>
            <person name="Squares S."/>
            <person name="Woodward J."/>
            <person name="Parkhill J."/>
            <person name="Temple L.M."/>
        </authorList>
    </citation>
    <scope>NUCLEOTIDE SEQUENCE [LARGE SCALE GENOMIC DNA]</scope>
    <source>
        <strain>197N</strain>
    </source>
</reference>
<proteinExistence type="inferred from homology"/>
<organism>
    <name type="scientific">Bordetella avium (strain 197N)</name>
    <dbReference type="NCBI Taxonomy" id="360910"/>
    <lineage>
        <taxon>Bacteria</taxon>
        <taxon>Pseudomonadati</taxon>
        <taxon>Pseudomonadota</taxon>
        <taxon>Betaproteobacteria</taxon>
        <taxon>Burkholderiales</taxon>
        <taxon>Alcaligenaceae</taxon>
        <taxon>Bordetella</taxon>
    </lineage>
</organism>
<gene>
    <name evidence="1" type="primary">ruvA</name>
    <name type="ordered locus">BAV2778</name>
</gene>